<comment type="function">
    <text evidence="1">Involved in unsaturated fatty acids biosynthesis. Catalyzes the dehydration of short chain beta-hydroxyacyl-ACPs and long chain saturated and unsaturated beta-hydroxyacyl-ACPs.</text>
</comment>
<comment type="catalytic activity">
    <reaction evidence="1">
        <text>a (3R)-hydroxyacyl-[ACP] = a (2E)-enoyl-[ACP] + H2O</text>
        <dbReference type="Rhea" id="RHEA:13097"/>
        <dbReference type="Rhea" id="RHEA-COMP:9925"/>
        <dbReference type="Rhea" id="RHEA-COMP:9945"/>
        <dbReference type="ChEBI" id="CHEBI:15377"/>
        <dbReference type="ChEBI" id="CHEBI:78784"/>
        <dbReference type="ChEBI" id="CHEBI:78827"/>
        <dbReference type="EC" id="4.2.1.59"/>
    </reaction>
</comment>
<comment type="subcellular location">
    <subcellularLocation>
        <location evidence="1">Cytoplasm</location>
    </subcellularLocation>
</comment>
<comment type="similarity">
    <text evidence="1">Belongs to the thioester dehydratase family. FabZ subfamily.</text>
</comment>
<sequence>MSEEQGAATDGVILDYDVRKVMAALPHRYPLLLVDRVASLTLNERIHAVKAVSMNEQFFQGHFPGRPIMPGVLQIEALAQAAGVLAVESLGLAGSGKLVYFMAIEDAKFRNPVEPGVLLDLHVEFTQKRSRVCKFSGKAMIGDKVTCEVNFTAMIADS</sequence>
<feature type="chain" id="PRO_0000242894" description="3-hydroxyacyl-[acyl-carrier-protein] dehydratase FabZ">
    <location>
        <begin position="1"/>
        <end position="158"/>
    </location>
</feature>
<feature type="active site" evidence="1">
    <location>
        <position position="62"/>
    </location>
</feature>
<proteinExistence type="inferred from homology"/>
<evidence type="ECO:0000255" key="1">
    <source>
        <dbReference type="HAMAP-Rule" id="MF_00406"/>
    </source>
</evidence>
<organism>
    <name type="scientific">Novosphingobium aromaticivorans (strain ATCC 700278 / DSM 12444 / CCUG 56034 / CIP 105152 / NBRC 16084 / F199)</name>
    <dbReference type="NCBI Taxonomy" id="279238"/>
    <lineage>
        <taxon>Bacteria</taxon>
        <taxon>Pseudomonadati</taxon>
        <taxon>Pseudomonadota</taxon>
        <taxon>Alphaproteobacteria</taxon>
        <taxon>Sphingomonadales</taxon>
        <taxon>Sphingomonadaceae</taxon>
        <taxon>Novosphingobium</taxon>
    </lineage>
</organism>
<keyword id="KW-0963">Cytoplasm</keyword>
<keyword id="KW-0441">Lipid A biosynthesis</keyword>
<keyword id="KW-0444">Lipid biosynthesis</keyword>
<keyword id="KW-0443">Lipid metabolism</keyword>
<keyword id="KW-0456">Lyase</keyword>
<keyword id="KW-1185">Reference proteome</keyword>
<dbReference type="EC" id="4.2.1.59" evidence="1"/>
<dbReference type="EMBL" id="CP000248">
    <property type="protein sequence ID" value="ABD25823.1"/>
    <property type="molecule type" value="Genomic_DNA"/>
</dbReference>
<dbReference type="RefSeq" id="WP_011445037.1">
    <property type="nucleotide sequence ID" value="NC_007794.1"/>
</dbReference>
<dbReference type="SMR" id="Q2G8K0"/>
<dbReference type="STRING" id="279238.Saro_1379"/>
<dbReference type="KEGG" id="nar:Saro_1379"/>
<dbReference type="eggNOG" id="COG0764">
    <property type="taxonomic scope" value="Bacteria"/>
</dbReference>
<dbReference type="HOGENOM" id="CLU_078912_1_0_5"/>
<dbReference type="Proteomes" id="UP000009134">
    <property type="component" value="Chromosome"/>
</dbReference>
<dbReference type="GO" id="GO:0005737">
    <property type="term" value="C:cytoplasm"/>
    <property type="evidence" value="ECO:0007669"/>
    <property type="project" value="UniProtKB-SubCell"/>
</dbReference>
<dbReference type="GO" id="GO:0016020">
    <property type="term" value="C:membrane"/>
    <property type="evidence" value="ECO:0007669"/>
    <property type="project" value="GOC"/>
</dbReference>
<dbReference type="GO" id="GO:0019171">
    <property type="term" value="F:(3R)-hydroxyacyl-[acyl-carrier-protein] dehydratase activity"/>
    <property type="evidence" value="ECO:0007669"/>
    <property type="project" value="UniProtKB-EC"/>
</dbReference>
<dbReference type="GO" id="GO:0006633">
    <property type="term" value="P:fatty acid biosynthetic process"/>
    <property type="evidence" value="ECO:0007669"/>
    <property type="project" value="UniProtKB-UniRule"/>
</dbReference>
<dbReference type="GO" id="GO:0009245">
    <property type="term" value="P:lipid A biosynthetic process"/>
    <property type="evidence" value="ECO:0007669"/>
    <property type="project" value="UniProtKB-UniRule"/>
</dbReference>
<dbReference type="CDD" id="cd01288">
    <property type="entry name" value="FabZ"/>
    <property type="match status" value="1"/>
</dbReference>
<dbReference type="FunFam" id="3.10.129.10:FF:000001">
    <property type="entry name" value="3-hydroxyacyl-[acyl-carrier-protein] dehydratase FabZ"/>
    <property type="match status" value="1"/>
</dbReference>
<dbReference type="Gene3D" id="3.10.129.10">
    <property type="entry name" value="Hotdog Thioesterase"/>
    <property type="match status" value="1"/>
</dbReference>
<dbReference type="HAMAP" id="MF_00406">
    <property type="entry name" value="FabZ"/>
    <property type="match status" value="1"/>
</dbReference>
<dbReference type="InterPro" id="IPR013114">
    <property type="entry name" value="FabA_FabZ"/>
</dbReference>
<dbReference type="InterPro" id="IPR010084">
    <property type="entry name" value="FabZ"/>
</dbReference>
<dbReference type="InterPro" id="IPR029069">
    <property type="entry name" value="HotDog_dom_sf"/>
</dbReference>
<dbReference type="NCBIfam" id="TIGR01750">
    <property type="entry name" value="fabZ"/>
    <property type="match status" value="1"/>
</dbReference>
<dbReference type="NCBIfam" id="NF000582">
    <property type="entry name" value="PRK00006.1"/>
    <property type="match status" value="1"/>
</dbReference>
<dbReference type="PANTHER" id="PTHR30272">
    <property type="entry name" value="3-HYDROXYACYL-[ACYL-CARRIER-PROTEIN] DEHYDRATASE"/>
    <property type="match status" value="1"/>
</dbReference>
<dbReference type="PANTHER" id="PTHR30272:SF1">
    <property type="entry name" value="3-HYDROXYACYL-[ACYL-CARRIER-PROTEIN] DEHYDRATASE"/>
    <property type="match status" value="1"/>
</dbReference>
<dbReference type="Pfam" id="PF07977">
    <property type="entry name" value="FabA"/>
    <property type="match status" value="1"/>
</dbReference>
<dbReference type="SUPFAM" id="SSF54637">
    <property type="entry name" value="Thioesterase/thiol ester dehydrase-isomerase"/>
    <property type="match status" value="1"/>
</dbReference>
<protein>
    <recommendedName>
        <fullName evidence="1">3-hydroxyacyl-[acyl-carrier-protein] dehydratase FabZ</fullName>
        <ecNumber evidence="1">4.2.1.59</ecNumber>
    </recommendedName>
    <alternativeName>
        <fullName evidence="1">(3R)-hydroxymyristoyl-[acyl-carrier-protein] dehydratase</fullName>
        <shortName evidence="1">(3R)-hydroxymyristoyl-ACP dehydrase</shortName>
    </alternativeName>
    <alternativeName>
        <fullName evidence="1">Beta-hydroxyacyl-ACP dehydratase</fullName>
    </alternativeName>
</protein>
<reference key="1">
    <citation type="submission" date="2006-01" db="EMBL/GenBank/DDBJ databases">
        <title>Complete sequence of Novosphingobium aromaticivorans DSM 12444.</title>
        <authorList>
            <consortium name="US DOE Joint Genome Institute"/>
            <person name="Copeland A."/>
            <person name="Lucas S."/>
            <person name="Lapidus A."/>
            <person name="Barry K."/>
            <person name="Detter J.C."/>
            <person name="Glavina T."/>
            <person name="Hammon N."/>
            <person name="Israni S."/>
            <person name="Pitluck S."/>
            <person name="Chain P."/>
            <person name="Malfatti S."/>
            <person name="Shin M."/>
            <person name="Vergez L."/>
            <person name="Schmutz J."/>
            <person name="Larimer F."/>
            <person name="Land M."/>
            <person name="Kyrpides N."/>
            <person name="Ivanova N."/>
            <person name="Fredrickson J."/>
            <person name="Balkwill D."/>
            <person name="Romine M.F."/>
            <person name="Richardson P."/>
        </authorList>
    </citation>
    <scope>NUCLEOTIDE SEQUENCE [LARGE SCALE GENOMIC DNA]</scope>
    <source>
        <strain>ATCC 700278 / DSM 12444 / CCUG 56034 / CIP 105152 / NBRC 16084 / F199</strain>
    </source>
</reference>
<accession>Q2G8K0</accession>
<gene>
    <name evidence="1" type="primary">fabZ</name>
    <name type="ordered locus">Saro_1379</name>
</gene>
<name>FABZ_NOVAD</name>